<sequence>MNILQNLKESDPVISNFINSEKNRQETHLELIASENFASIAVMQAQGSVLTNKYAEGLPQKRYYGGCEFVDEIEELAIQRAKKLFNANWANVQPHSGAQANAAVFLSLLKPGDTIMGMDLSHGGHLTHGSPVNMSGKWFNAVHYGVNKETSELNFDEIREIALEKKPKLIICGYSAYPRTIDFESFRNIADEVGAFLMADIAHIAGLVASKLHPNPIPHCDVVTTTTHKTLRGPRGGLILCKDAEFGKKFDKSVFPGTQGGPLEHIIAAKAVAFREALQPDFVNYSQQVIKNAKVLASTLINRGINIVSGGTDNHIVLLDLRSINMTGKIADLLVSEVNITANKNTVPFDPESPFVTSGLRLGTAALTTRGFNENAFAEVGEIIADRLLNPDNSLIESQCKERVLTLCNRFPLYEGKLEASIK</sequence>
<protein>
    <recommendedName>
        <fullName evidence="1">Serine hydroxymethyltransferase</fullName>
        <shortName evidence="1">SHMT</shortName>
        <shortName evidence="1">Serine methylase</shortName>
        <ecNumber evidence="1">2.1.2.1</ecNumber>
    </recommendedName>
</protein>
<comment type="function">
    <text evidence="1">Catalyzes the reversible interconversion of serine and glycine with tetrahydrofolate (THF) serving as the one-carbon carrier. This reaction serves as the major source of one-carbon groups required for the biosynthesis of purines, thymidylate, methionine, and other important biomolecules. Also exhibits THF-independent aldolase activity toward beta-hydroxyamino acids, producing glycine and aldehydes, via a retro-aldol mechanism.</text>
</comment>
<comment type="catalytic activity">
    <reaction evidence="1">
        <text>(6R)-5,10-methylene-5,6,7,8-tetrahydrofolate + glycine + H2O = (6S)-5,6,7,8-tetrahydrofolate + L-serine</text>
        <dbReference type="Rhea" id="RHEA:15481"/>
        <dbReference type="ChEBI" id="CHEBI:15377"/>
        <dbReference type="ChEBI" id="CHEBI:15636"/>
        <dbReference type="ChEBI" id="CHEBI:33384"/>
        <dbReference type="ChEBI" id="CHEBI:57305"/>
        <dbReference type="ChEBI" id="CHEBI:57453"/>
        <dbReference type="EC" id="2.1.2.1"/>
    </reaction>
</comment>
<comment type="cofactor">
    <cofactor evidence="1">
        <name>pyridoxal 5'-phosphate</name>
        <dbReference type="ChEBI" id="CHEBI:597326"/>
    </cofactor>
</comment>
<comment type="pathway">
    <text evidence="1">One-carbon metabolism; tetrahydrofolate interconversion.</text>
</comment>
<comment type="pathway">
    <text evidence="1">Amino-acid biosynthesis; glycine biosynthesis; glycine from L-serine: step 1/1.</text>
</comment>
<comment type="subunit">
    <text evidence="1">Homodimer.</text>
</comment>
<comment type="subcellular location">
    <subcellularLocation>
        <location evidence="1">Cytoplasm</location>
    </subcellularLocation>
</comment>
<comment type="similarity">
    <text evidence="1">Belongs to the SHMT family.</text>
</comment>
<dbReference type="EC" id="2.1.2.1" evidence="1"/>
<dbReference type="EMBL" id="CP000551">
    <property type="protein sequence ID" value="ABM69568.1"/>
    <property type="molecule type" value="Genomic_DNA"/>
</dbReference>
<dbReference type="RefSeq" id="WP_011817750.1">
    <property type="nucleotide sequence ID" value="NC_008816.1"/>
</dbReference>
<dbReference type="SMR" id="A2BP57"/>
<dbReference type="STRING" id="146891.A9601_02801"/>
<dbReference type="KEGG" id="pmb:A9601_02801"/>
<dbReference type="eggNOG" id="COG0112">
    <property type="taxonomic scope" value="Bacteria"/>
</dbReference>
<dbReference type="HOGENOM" id="CLU_022477_2_1_3"/>
<dbReference type="OrthoDB" id="9803846at2"/>
<dbReference type="UniPathway" id="UPA00193"/>
<dbReference type="UniPathway" id="UPA00288">
    <property type="reaction ID" value="UER01023"/>
</dbReference>
<dbReference type="Proteomes" id="UP000002590">
    <property type="component" value="Chromosome"/>
</dbReference>
<dbReference type="GO" id="GO:0005829">
    <property type="term" value="C:cytosol"/>
    <property type="evidence" value="ECO:0007669"/>
    <property type="project" value="TreeGrafter"/>
</dbReference>
<dbReference type="GO" id="GO:0004372">
    <property type="term" value="F:glycine hydroxymethyltransferase activity"/>
    <property type="evidence" value="ECO:0007669"/>
    <property type="project" value="UniProtKB-UniRule"/>
</dbReference>
<dbReference type="GO" id="GO:0030170">
    <property type="term" value="F:pyridoxal phosphate binding"/>
    <property type="evidence" value="ECO:0007669"/>
    <property type="project" value="UniProtKB-UniRule"/>
</dbReference>
<dbReference type="GO" id="GO:0019264">
    <property type="term" value="P:glycine biosynthetic process from serine"/>
    <property type="evidence" value="ECO:0007669"/>
    <property type="project" value="UniProtKB-UniRule"/>
</dbReference>
<dbReference type="GO" id="GO:0035999">
    <property type="term" value="P:tetrahydrofolate interconversion"/>
    <property type="evidence" value="ECO:0007669"/>
    <property type="project" value="UniProtKB-UniRule"/>
</dbReference>
<dbReference type="CDD" id="cd00378">
    <property type="entry name" value="SHMT"/>
    <property type="match status" value="1"/>
</dbReference>
<dbReference type="FunFam" id="3.40.640.10:FF:000001">
    <property type="entry name" value="Serine hydroxymethyltransferase"/>
    <property type="match status" value="1"/>
</dbReference>
<dbReference type="FunFam" id="3.90.1150.10:FF:000003">
    <property type="entry name" value="Serine hydroxymethyltransferase"/>
    <property type="match status" value="1"/>
</dbReference>
<dbReference type="Gene3D" id="3.90.1150.10">
    <property type="entry name" value="Aspartate Aminotransferase, domain 1"/>
    <property type="match status" value="1"/>
</dbReference>
<dbReference type="Gene3D" id="3.40.640.10">
    <property type="entry name" value="Type I PLP-dependent aspartate aminotransferase-like (Major domain)"/>
    <property type="match status" value="1"/>
</dbReference>
<dbReference type="HAMAP" id="MF_00051">
    <property type="entry name" value="SHMT"/>
    <property type="match status" value="1"/>
</dbReference>
<dbReference type="InterPro" id="IPR015424">
    <property type="entry name" value="PyrdxlP-dep_Trfase"/>
</dbReference>
<dbReference type="InterPro" id="IPR015421">
    <property type="entry name" value="PyrdxlP-dep_Trfase_major"/>
</dbReference>
<dbReference type="InterPro" id="IPR015422">
    <property type="entry name" value="PyrdxlP-dep_Trfase_small"/>
</dbReference>
<dbReference type="InterPro" id="IPR001085">
    <property type="entry name" value="Ser_HO-MeTrfase"/>
</dbReference>
<dbReference type="InterPro" id="IPR049943">
    <property type="entry name" value="Ser_HO-MeTrfase-like"/>
</dbReference>
<dbReference type="InterPro" id="IPR019798">
    <property type="entry name" value="Ser_HO-MeTrfase_PLP_BS"/>
</dbReference>
<dbReference type="InterPro" id="IPR039429">
    <property type="entry name" value="SHMT-like_dom"/>
</dbReference>
<dbReference type="NCBIfam" id="NF000586">
    <property type="entry name" value="PRK00011.1"/>
    <property type="match status" value="1"/>
</dbReference>
<dbReference type="PANTHER" id="PTHR11680">
    <property type="entry name" value="SERINE HYDROXYMETHYLTRANSFERASE"/>
    <property type="match status" value="1"/>
</dbReference>
<dbReference type="PANTHER" id="PTHR11680:SF35">
    <property type="entry name" value="SERINE HYDROXYMETHYLTRANSFERASE 1"/>
    <property type="match status" value="1"/>
</dbReference>
<dbReference type="Pfam" id="PF00464">
    <property type="entry name" value="SHMT"/>
    <property type="match status" value="1"/>
</dbReference>
<dbReference type="PIRSF" id="PIRSF000412">
    <property type="entry name" value="SHMT"/>
    <property type="match status" value="1"/>
</dbReference>
<dbReference type="SUPFAM" id="SSF53383">
    <property type="entry name" value="PLP-dependent transferases"/>
    <property type="match status" value="1"/>
</dbReference>
<dbReference type="PROSITE" id="PS00096">
    <property type="entry name" value="SHMT"/>
    <property type="match status" value="1"/>
</dbReference>
<gene>
    <name evidence="1" type="primary">glyA</name>
    <name type="ordered locus">A9601_02801</name>
</gene>
<keyword id="KW-0028">Amino-acid biosynthesis</keyword>
<keyword id="KW-0963">Cytoplasm</keyword>
<keyword id="KW-0554">One-carbon metabolism</keyword>
<keyword id="KW-0663">Pyridoxal phosphate</keyword>
<keyword id="KW-0808">Transferase</keyword>
<accession>A2BP57</accession>
<organism>
    <name type="scientific">Prochlorococcus marinus (strain AS9601)</name>
    <dbReference type="NCBI Taxonomy" id="146891"/>
    <lineage>
        <taxon>Bacteria</taxon>
        <taxon>Bacillati</taxon>
        <taxon>Cyanobacteriota</taxon>
        <taxon>Cyanophyceae</taxon>
        <taxon>Synechococcales</taxon>
        <taxon>Prochlorococcaceae</taxon>
        <taxon>Prochlorococcus</taxon>
    </lineage>
</organism>
<name>GLYA_PROMS</name>
<feature type="chain" id="PRO_1000006297" description="Serine hydroxymethyltransferase">
    <location>
        <begin position="1"/>
        <end position="423"/>
    </location>
</feature>
<feature type="binding site" evidence="1">
    <location>
        <position position="120"/>
    </location>
    <ligand>
        <name>(6S)-5,6,7,8-tetrahydrofolate</name>
        <dbReference type="ChEBI" id="CHEBI:57453"/>
    </ligand>
</feature>
<feature type="binding site" evidence="1">
    <location>
        <begin position="124"/>
        <end position="126"/>
    </location>
    <ligand>
        <name>(6S)-5,6,7,8-tetrahydrofolate</name>
        <dbReference type="ChEBI" id="CHEBI:57453"/>
    </ligand>
</feature>
<feature type="binding site" evidence="1">
    <location>
        <begin position="353"/>
        <end position="355"/>
    </location>
    <ligand>
        <name>(6S)-5,6,7,8-tetrahydrofolate</name>
        <dbReference type="ChEBI" id="CHEBI:57453"/>
    </ligand>
</feature>
<feature type="site" description="Plays an important role in substrate specificity" evidence="1">
    <location>
        <position position="228"/>
    </location>
</feature>
<feature type="modified residue" description="N6-(pyridoxal phosphate)lysine" evidence="1">
    <location>
        <position position="229"/>
    </location>
</feature>
<evidence type="ECO:0000255" key="1">
    <source>
        <dbReference type="HAMAP-Rule" id="MF_00051"/>
    </source>
</evidence>
<reference key="1">
    <citation type="journal article" date="2007" name="PLoS Genet.">
        <title>Patterns and implications of gene gain and loss in the evolution of Prochlorococcus.</title>
        <authorList>
            <person name="Kettler G.C."/>
            <person name="Martiny A.C."/>
            <person name="Huang K."/>
            <person name="Zucker J."/>
            <person name="Coleman M.L."/>
            <person name="Rodrigue S."/>
            <person name="Chen F."/>
            <person name="Lapidus A."/>
            <person name="Ferriera S."/>
            <person name="Johnson J."/>
            <person name="Steglich C."/>
            <person name="Church G.M."/>
            <person name="Richardson P."/>
            <person name="Chisholm S.W."/>
        </authorList>
    </citation>
    <scope>NUCLEOTIDE SEQUENCE [LARGE SCALE GENOMIC DNA]</scope>
    <source>
        <strain>AS9601</strain>
    </source>
</reference>
<proteinExistence type="inferred from homology"/>